<gene>
    <name evidence="1" type="primary">tmk</name>
    <name type="ordered locus">ECUMN_1275</name>
</gene>
<accession>B7NAX6</accession>
<sequence>MRSKYIVIEGLEGAGKTTARNVVVETLEQLGIRDMVFTREPGGTQLAEKLRSLVLDIKSVGDEVITDKAEVLMFYAARVQLVETVIKPALANGTWVIGDRHDLSTQAYQGGGRGIDQHMLATLRDAVLGDFRPDLTLYLDVTPEVGLKRARARGELDRIEQESFDFFNRTRARYLELAAQDKSIHTIDATQPLEAVMDAIRTTVTNWVKELDA</sequence>
<reference key="1">
    <citation type="journal article" date="2009" name="PLoS Genet.">
        <title>Organised genome dynamics in the Escherichia coli species results in highly diverse adaptive paths.</title>
        <authorList>
            <person name="Touchon M."/>
            <person name="Hoede C."/>
            <person name="Tenaillon O."/>
            <person name="Barbe V."/>
            <person name="Baeriswyl S."/>
            <person name="Bidet P."/>
            <person name="Bingen E."/>
            <person name="Bonacorsi S."/>
            <person name="Bouchier C."/>
            <person name="Bouvet O."/>
            <person name="Calteau A."/>
            <person name="Chiapello H."/>
            <person name="Clermont O."/>
            <person name="Cruveiller S."/>
            <person name="Danchin A."/>
            <person name="Diard M."/>
            <person name="Dossat C."/>
            <person name="Karoui M.E."/>
            <person name="Frapy E."/>
            <person name="Garry L."/>
            <person name="Ghigo J.M."/>
            <person name="Gilles A.M."/>
            <person name="Johnson J."/>
            <person name="Le Bouguenec C."/>
            <person name="Lescat M."/>
            <person name="Mangenot S."/>
            <person name="Martinez-Jehanne V."/>
            <person name="Matic I."/>
            <person name="Nassif X."/>
            <person name="Oztas S."/>
            <person name="Petit M.A."/>
            <person name="Pichon C."/>
            <person name="Rouy Z."/>
            <person name="Ruf C.S."/>
            <person name="Schneider D."/>
            <person name="Tourret J."/>
            <person name="Vacherie B."/>
            <person name="Vallenet D."/>
            <person name="Medigue C."/>
            <person name="Rocha E.P.C."/>
            <person name="Denamur E."/>
        </authorList>
    </citation>
    <scope>NUCLEOTIDE SEQUENCE [LARGE SCALE GENOMIC DNA]</scope>
    <source>
        <strain>UMN026 / ExPEC</strain>
    </source>
</reference>
<dbReference type="EC" id="2.7.4.9" evidence="1"/>
<dbReference type="EMBL" id="CU928163">
    <property type="protein sequence ID" value="CAR12485.1"/>
    <property type="molecule type" value="Genomic_DNA"/>
</dbReference>
<dbReference type="RefSeq" id="WP_001257002.1">
    <property type="nucleotide sequence ID" value="NC_011751.1"/>
</dbReference>
<dbReference type="RefSeq" id="YP_002412028.1">
    <property type="nucleotide sequence ID" value="NC_011751.1"/>
</dbReference>
<dbReference type="SMR" id="B7NAX6"/>
<dbReference type="STRING" id="585056.ECUMN_1275"/>
<dbReference type="KEGG" id="eum:ECUMN_1275"/>
<dbReference type="PATRIC" id="fig|585056.7.peg.1479"/>
<dbReference type="HOGENOM" id="CLU_049131_0_1_6"/>
<dbReference type="Proteomes" id="UP000007097">
    <property type="component" value="Chromosome"/>
</dbReference>
<dbReference type="GO" id="GO:0005829">
    <property type="term" value="C:cytosol"/>
    <property type="evidence" value="ECO:0007669"/>
    <property type="project" value="TreeGrafter"/>
</dbReference>
<dbReference type="GO" id="GO:0005524">
    <property type="term" value="F:ATP binding"/>
    <property type="evidence" value="ECO:0007669"/>
    <property type="project" value="UniProtKB-UniRule"/>
</dbReference>
<dbReference type="GO" id="GO:0004798">
    <property type="term" value="F:dTMP kinase activity"/>
    <property type="evidence" value="ECO:0007669"/>
    <property type="project" value="UniProtKB-UniRule"/>
</dbReference>
<dbReference type="GO" id="GO:0006233">
    <property type="term" value="P:dTDP biosynthetic process"/>
    <property type="evidence" value="ECO:0007669"/>
    <property type="project" value="InterPro"/>
</dbReference>
<dbReference type="GO" id="GO:0006235">
    <property type="term" value="P:dTTP biosynthetic process"/>
    <property type="evidence" value="ECO:0007669"/>
    <property type="project" value="UniProtKB-UniRule"/>
</dbReference>
<dbReference type="GO" id="GO:0006227">
    <property type="term" value="P:dUDP biosynthetic process"/>
    <property type="evidence" value="ECO:0007669"/>
    <property type="project" value="TreeGrafter"/>
</dbReference>
<dbReference type="CDD" id="cd01672">
    <property type="entry name" value="TMPK"/>
    <property type="match status" value="1"/>
</dbReference>
<dbReference type="FunFam" id="3.40.50.300:FF:000321">
    <property type="entry name" value="Thymidylate kinase"/>
    <property type="match status" value="1"/>
</dbReference>
<dbReference type="Gene3D" id="3.40.50.300">
    <property type="entry name" value="P-loop containing nucleotide triphosphate hydrolases"/>
    <property type="match status" value="1"/>
</dbReference>
<dbReference type="HAMAP" id="MF_00165">
    <property type="entry name" value="Thymidylate_kinase"/>
    <property type="match status" value="1"/>
</dbReference>
<dbReference type="InterPro" id="IPR027417">
    <property type="entry name" value="P-loop_NTPase"/>
</dbReference>
<dbReference type="InterPro" id="IPR039430">
    <property type="entry name" value="Thymidylate_kin-like_dom"/>
</dbReference>
<dbReference type="InterPro" id="IPR018095">
    <property type="entry name" value="Thymidylate_kin_CS"/>
</dbReference>
<dbReference type="InterPro" id="IPR018094">
    <property type="entry name" value="Thymidylate_kinase"/>
</dbReference>
<dbReference type="NCBIfam" id="TIGR00041">
    <property type="entry name" value="DTMP_kinase"/>
    <property type="match status" value="1"/>
</dbReference>
<dbReference type="PANTHER" id="PTHR10344">
    <property type="entry name" value="THYMIDYLATE KINASE"/>
    <property type="match status" value="1"/>
</dbReference>
<dbReference type="PANTHER" id="PTHR10344:SF4">
    <property type="entry name" value="UMP-CMP KINASE 2, MITOCHONDRIAL"/>
    <property type="match status" value="1"/>
</dbReference>
<dbReference type="Pfam" id="PF02223">
    <property type="entry name" value="Thymidylate_kin"/>
    <property type="match status" value="1"/>
</dbReference>
<dbReference type="SUPFAM" id="SSF52540">
    <property type="entry name" value="P-loop containing nucleoside triphosphate hydrolases"/>
    <property type="match status" value="1"/>
</dbReference>
<dbReference type="PROSITE" id="PS01331">
    <property type="entry name" value="THYMIDYLATE_KINASE"/>
    <property type="match status" value="1"/>
</dbReference>
<name>KTHY_ECOLU</name>
<proteinExistence type="inferred from homology"/>
<keyword id="KW-0067">ATP-binding</keyword>
<keyword id="KW-0418">Kinase</keyword>
<keyword id="KW-0545">Nucleotide biosynthesis</keyword>
<keyword id="KW-0547">Nucleotide-binding</keyword>
<keyword id="KW-0808">Transferase</keyword>
<comment type="function">
    <text evidence="1">Phosphorylation of dTMP to form dTDP in both de novo and salvage pathways of dTTP synthesis.</text>
</comment>
<comment type="catalytic activity">
    <reaction evidence="1">
        <text>dTMP + ATP = dTDP + ADP</text>
        <dbReference type="Rhea" id="RHEA:13517"/>
        <dbReference type="ChEBI" id="CHEBI:30616"/>
        <dbReference type="ChEBI" id="CHEBI:58369"/>
        <dbReference type="ChEBI" id="CHEBI:63528"/>
        <dbReference type="ChEBI" id="CHEBI:456216"/>
        <dbReference type="EC" id="2.7.4.9"/>
    </reaction>
</comment>
<comment type="similarity">
    <text evidence="1">Belongs to the thymidylate kinase family.</text>
</comment>
<evidence type="ECO:0000255" key="1">
    <source>
        <dbReference type="HAMAP-Rule" id="MF_00165"/>
    </source>
</evidence>
<organism>
    <name type="scientific">Escherichia coli O17:K52:H18 (strain UMN026 / ExPEC)</name>
    <dbReference type="NCBI Taxonomy" id="585056"/>
    <lineage>
        <taxon>Bacteria</taxon>
        <taxon>Pseudomonadati</taxon>
        <taxon>Pseudomonadota</taxon>
        <taxon>Gammaproteobacteria</taxon>
        <taxon>Enterobacterales</taxon>
        <taxon>Enterobacteriaceae</taxon>
        <taxon>Escherichia</taxon>
    </lineage>
</organism>
<protein>
    <recommendedName>
        <fullName evidence="1">Thymidylate kinase</fullName>
        <ecNumber evidence="1">2.7.4.9</ecNumber>
    </recommendedName>
    <alternativeName>
        <fullName evidence="1">dTMP kinase</fullName>
    </alternativeName>
</protein>
<feature type="chain" id="PRO_1000190762" description="Thymidylate kinase">
    <location>
        <begin position="1"/>
        <end position="213"/>
    </location>
</feature>
<feature type="binding site" evidence="1">
    <location>
        <begin position="10"/>
        <end position="17"/>
    </location>
    <ligand>
        <name>ATP</name>
        <dbReference type="ChEBI" id="CHEBI:30616"/>
    </ligand>
</feature>